<keyword id="KW-0687">Ribonucleoprotein</keyword>
<keyword id="KW-0689">Ribosomal protein</keyword>
<keyword id="KW-0694">RNA-binding</keyword>
<keyword id="KW-0699">rRNA-binding</keyword>
<sequence>MSLDKGTKEEITKKFQLHEKDTGSADVQIAILTEHITELKQHLKRSPKDQNSRLALLKLVGQRRKLLEYLNSTDTERYKNLITRLNLRK</sequence>
<evidence type="ECO:0000255" key="1">
    <source>
        <dbReference type="HAMAP-Rule" id="MF_01343"/>
    </source>
</evidence>
<evidence type="ECO:0000305" key="2"/>
<feature type="chain" id="PRO_0000255486" description="Small ribosomal subunit protein uS15">
    <location>
        <begin position="1"/>
        <end position="89"/>
    </location>
</feature>
<dbReference type="EMBL" id="AP006861">
    <property type="protein sequence ID" value="BAE81025.1"/>
    <property type="molecule type" value="Genomic_DNA"/>
</dbReference>
<dbReference type="RefSeq" id="WP_011457806.1">
    <property type="nucleotide sequence ID" value="NC_007899.1"/>
</dbReference>
<dbReference type="SMR" id="Q255L3"/>
<dbReference type="STRING" id="264202.CF0253"/>
<dbReference type="KEGG" id="cfe:CF0253"/>
<dbReference type="eggNOG" id="COG0184">
    <property type="taxonomic scope" value="Bacteria"/>
</dbReference>
<dbReference type="HOGENOM" id="CLU_148518_0_0_0"/>
<dbReference type="OrthoDB" id="9799262at2"/>
<dbReference type="Proteomes" id="UP000001260">
    <property type="component" value="Chromosome"/>
</dbReference>
<dbReference type="GO" id="GO:0022627">
    <property type="term" value="C:cytosolic small ribosomal subunit"/>
    <property type="evidence" value="ECO:0007669"/>
    <property type="project" value="TreeGrafter"/>
</dbReference>
<dbReference type="GO" id="GO:0019843">
    <property type="term" value="F:rRNA binding"/>
    <property type="evidence" value="ECO:0007669"/>
    <property type="project" value="UniProtKB-UniRule"/>
</dbReference>
<dbReference type="GO" id="GO:0003735">
    <property type="term" value="F:structural constituent of ribosome"/>
    <property type="evidence" value="ECO:0007669"/>
    <property type="project" value="InterPro"/>
</dbReference>
<dbReference type="GO" id="GO:0006412">
    <property type="term" value="P:translation"/>
    <property type="evidence" value="ECO:0007669"/>
    <property type="project" value="UniProtKB-UniRule"/>
</dbReference>
<dbReference type="CDD" id="cd00353">
    <property type="entry name" value="Ribosomal_S15p_S13e"/>
    <property type="match status" value="1"/>
</dbReference>
<dbReference type="FunFam" id="1.10.287.10:FF:000002">
    <property type="entry name" value="30S ribosomal protein S15"/>
    <property type="match status" value="1"/>
</dbReference>
<dbReference type="Gene3D" id="6.10.250.3130">
    <property type="match status" value="1"/>
</dbReference>
<dbReference type="Gene3D" id="1.10.287.10">
    <property type="entry name" value="S15/NS1, RNA-binding"/>
    <property type="match status" value="1"/>
</dbReference>
<dbReference type="HAMAP" id="MF_01343_B">
    <property type="entry name" value="Ribosomal_uS15_B"/>
    <property type="match status" value="1"/>
</dbReference>
<dbReference type="InterPro" id="IPR000589">
    <property type="entry name" value="Ribosomal_uS15"/>
</dbReference>
<dbReference type="InterPro" id="IPR005290">
    <property type="entry name" value="Ribosomal_uS15_bac-type"/>
</dbReference>
<dbReference type="InterPro" id="IPR009068">
    <property type="entry name" value="uS15_NS1_RNA-bd_sf"/>
</dbReference>
<dbReference type="NCBIfam" id="TIGR00952">
    <property type="entry name" value="S15_bact"/>
    <property type="match status" value="1"/>
</dbReference>
<dbReference type="PANTHER" id="PTHR23321">
    <property type="entry name" value="RIBOSOMAL PROTEIN S15, BACTERIAL AND ORGANELLAR"/>
    <property type="match status" value="1"/>
</dbReference>
<dbReference type="PANTHER" id="PTHR23321:SF26">
    <property type="entry name" value="SMALL RIBOSOMAL SUBUNIT PROTEIN US15M"/>
    <property type="match status" value="1"/>
</dbReference>
<dbReference type="Pfam" id="PF00312">
    <property type="entry name" value="Ribosomal_S15"/>
    <property type="match status" value="1"/>
</dbReference>
<dbReference type="SMART" id="SM01387">
    <property type="entry name" value="Ribosomal_S15"/>
    <property type="match status" value="1"/>
</dbReference>
<dbReference type="SUPFAM" id="SSF47060">
    <property type="entry name" value="S15/NS1 RNA-binding domain"/>
    <property type="match status" value="1"/>
</dbReference>
<dbReference type="PROSITE" id="PS00362">
    <property type="entry name" value="RIBOSOMAL_S15"/>
    <property type="match status" value="1"/>
</dbReference>
<proteinExistence type="inferred from homology"/>
<comment type="function">
    <text evidence="1">One of the primary rRNA binding proteins, it binds directly to 16S rRNA where it helps nucleate assembly of the platform of the 30S subunit by binding and bridging several RNA helices of the 16S rRNA.</text>
</comment>
<comment type="function">
    <text evidence="1">Forms an intersubunit bridge (bridge B4) with the 23S rRNA of the 50S subunit in the ribosome.</text>
</comment>
<comment type="subunit">
    <text evidence="1">Part of the 30S ribosomal subunit. Forms a bridge to the 50S subunit in the 70S ribosome, contacting the 23S rRNA.</text>
</comment>
<comment type="similarity">
    <text evidence="1">Belongs to the universal ribosomal protein uS15 family.</text>
</comment>
<gene>
    <name evidence="1" type="primary">rpsO</name>
    <name type="ordered locus">CF0253</name>
</gene>
<reference key="1">
    <citation type="journal article" date="2006" name="DNA Res.">
        <title>Genome sequence of the cat pathogen, Chlamydophila felis.</title>
        <authorList>
            <person name="Azuma Y."/>
            <person name="Hirakawa H."/>
            <person name="Yamashita A."/>
            <person name="Cai Y."/>
            <person name="Rahman M.A."/>
            <person name="Suzuki H."/>
            <person name="Mitaku S."/>
            <person name="Toh H."/>
            <person name="Goto S."/>
            <person name="Murakami T."/>
            <person name="Sugi K."/>
            <person name="Hayashi H."/>
            <person name="Fukushi H."/>
            <person name="Hattori M."/>
            <person name="Kuhara S."/>
            <person name="Shirai M."/>
        </authorList>
    </citation>
    <scope>NUCLEOTIDE SEQUENCE [LARGE SCALE GENOMIC DNA]</scope>
    <source>
        <strain>Fe/C-56</strain>
    </source>
</reference>
<name>RS15_CHLFF</name>
<accession>Q255L3</accession>
<organism>
    <name type="scientific">Chlamydia felis (strain Fe/C-56)</name>
    <name type="common">Chlamydophila felis</name>
    <dbReference type="NCBI Taxonomy" id="264202"/>
    <lineage>
        <taxon>Bacteria</taxon>
        <taxon>Pseudomonadati</taxon>
        <taxon>Chlamydiota</taxon>
        <taxon>Chlamydiia</taxon>
        <taxon>Chlamydiales</taxon>
        <taxon>Chlamydiaceae</taxon>
        <taxon>Chlamydia/Chlamydophila group</taxon>
        <taxon>Chlamydia</taxon>
    </lineage>
</organism>
<protein>
    <recommendedName>
        <fullName evidence="1">Small ribosomal subunit protein uS15</fullName>
    </recommendedName>
    <alternativeName>
        <fullName evidence="2">30S ribosomal protein S15</fullName>
    </alternativeName>
</protein>